<reference key="1">
    <citation type="journal article" date="2011" name="J. Bacteriol.">
        <title>Comparative genomics of 28 Salmonella enterica isolates: evidence for CRISPR-mediated adaptive sublineage evolution.</title>
        <authorList>
            <person name="Fricke W.F."/>
            <person name="Mammel M.K."/>
            <person name="McDermott P.F."/>
            <person name="Tartera C."/>
            <person name="White D.G."/>
            <person name="Leclerc J.E."/>
            <person name="Ravel J."/>
            <person name="Cebula T.A."/>
        </authorList>
    </citation>
    <scope>NUCLEOTIDE SEQUENCE [LARGE SCALE GENOMIC DNA]</scope>
    <source>
        <strain>SL254</strain>
    </source>
</reference>
<proteinExistence type="inferred from homology"/>
<dbReference type="EC" id="7.1.1.-" evidence="1"/>
<dbReference type="EMBL" id="CP001113">
    <property type="protein sequence ID" value="ACF63823.1"/>
    <property type="molecule type" value="Genomic_DNA"/>
</dbReference>
<dbReference type="RefSeq" id="WP_000118515.1">
    <property type="nucleotide sequence ID" value="NZ_CCMR01000001.1"/>
</dbReference>
<dbReference type="SMR" id="B4SYZ3"/>
<dbReference type="GeneID" id="66756771"/>
<dbReference type="KEGG" id="see:SNSL254_A2506"/>
<dbReference type="HOGENOM" id="CLU_015134_0_1_6"/>
<dbReference type="Proteomes" id="UP000008824">
    <property type="component" value="Chromosome"/>
</dbReference>
<dbReference type="GO" id="GO:0005886">
    <property type="term" value="C:plasma membrane"/>
    <property type="evidence" value="ECO:0007669"/>
    <property type="project" value="UniProtKB-SubCell"/>
</dbReference>
<dbReference type="GO" id="GO:0003954">
    <property type="term" value="F:NADH dehydrogenase activity"/>
    <property type="evidence" value="ECO:0007669"/>
    <property type="project" value="TreeGrafter"/>
</dbReference>
<dbReference type="GO" id="GO:0016655">
    <property type="term" value="F:oxidoreductase activity, acting on NAD(P)H, quinone or similar compound as acceptor"/>
    <property type="evidence" value="ECO:0007669"/>
    <property type="project" value="UniProtKB-UniRule"/>
</dbReference>
<dbReference type="GO" id="GO:0048038">
    <property type="term" value="F:quinone binding"/>
    <property type="evidence" value="ECO:0007669"/>
    <property type="project" value="UniProtKB-KW"/>
</dbReference>
<dbReference type="GO" id="GO:0009060">
    <property type="term" value="P:aerobic respiration"/>
    <property type="evidence" value="ECO:0007669"/>
    <property type="project" value="TreeGrafter"/>
</dbReference>
<dbReference type="HAMAP" id="MF_01350">
    <property type="entry name" value="NDH1_NuoH"/>
    <property type="match status" value="1"/>
</dbReference>
<dbReference type="InterPro" id="IPR001694">
    <property type="entry name" value="NADH_UbQ_OxRdtase_su1/FPO"/>
</dbReference>
<dbReference type="InterPro" id="IPR018086">
    <property type="entry name" value="NADH_UbQ_OxRdtase_su1_CS"/>
</dbReference>
<dbReference type="NCBIfam" id="NF004740">
    <property type="entry name" value="PRK06076.1-1"/>
    <property type="match status" value="1"/>
</dbReference>
<dbReference type="NCBIfam" id="NF004741">
    <property type="entry name" value="PRK06076.1-2"/>
    <property type="match status" value="1"/>
</dbReference>
<dbReference type="PANTHER" id="PTHR11432">
    <property type="entry name" value="NADH DEHYDROGENASE SUBUNIT 1"/>
    <property type="match status" value="1"/>
</dbReference>
<dbReference type="PANTHER" id="PTHR11432:SF3">
    <property type="entry name" value="NADH-UBIQUINONE OXIDOREDUCTASE CHAIN 1"/>
    <property type="match status" value="1"/>
</dbReference>
<dbReference type="Pfam" id="PF00146">
    <property type="entry name" value="NADHdh"/>
    <property type="match status" value="1"/>
</dbReference>
<dbReference type="PROSITE" id="PS00667">
    <property type="entry name" value="COMPLEX1_ND1_1"/>
    <property type="match status" value="1"/>
</dbReference>
<dbReference type="PROSITE" id="PS00668">
    <property type="entry name" value="COMPLEX1_ND1_2"/>
    <property type="match status" value="1"/>
</dbReference>
<organism>
    <name type="scientific">Salmonella newport (strain SL254)</name>
    <dbReference type="NCBI Taxonomy" id="423368"/>
    <lineage>
        <taxon>Bacteria</taxon>
        <taxon>Pseudomonadati</taxon>
        <taxon>Pseudomonadota</taxon>
        <taxon>Gammaproteobacteria</taxon>
        <taxon>Enterobacterales</taxon>
        <taxon>Enterobacteriaceae</taxon>
        <taxon>Salmonella</taxon>
    </lineage>
</organism>
<name>NUOH_SALNS</name>
<accession>B4SYZ3</accession>
<protein>
    <recommendedName>
        <fullName evidence="1">NADH-quinone oxidoreductase subunit H</fullName>
        <ecNumber evidence="1">7.1.1.-</ecNumber>
    </recommendedName>
    <alternativeName>
        <fullName evidence="1">NADH dehydrogenase I subunit H</fullName>
    </alternativeName>
    <alternativeName>
        <fullName evidence="1">NDH-1 subunit H</fullName>
    </alternativeName>
</protein>
<gene>
    <name evidence="1" type="primary">nuoH</name>
    <name type="ordered locus">SNSL254_A2506</name>
</gene>
<feature type="chain" id="PRO_1000143619" description="NADH-quinone oxidoreductase subunit H">
    <location>
        <begin position="1"/>
        <end position="325"/>
    </location>
</feature>
<feature type="transmembrane region" description="Helical" evidence="1">
    <location>
        <begin position="11"/>
        <end position="31"/>
    </location>
</feature>
<feature type="transmembrane region" description="Helical" evidence="1">
    <location>
        <begin position="50"/>
        <end position="69"/>
    </location>
</feature>
<feature type="transmembrane region" description="Helical" evidence="1">
    <location>
        <begin position="81"/>
        <end position="101"/>
    </location>
</feature>
<feature type="transmembrane region" description="Helical" evidence="1">
    <location>
        <begin position="114"/>
        <end position="134"/>
    </location>
</feature>
<feature type="transmembrane region" description="Helical" evidence="1">
    <location>
        <begin position="154"/>
        <end position="174"/>
    </location>
</feature>
<feature type="transmembrane region" description="Helical" evidence="1">
    <location>
        <begin position="186"/>
        <end position="206"/>
    </location>
</feature>
<feature type="transmembrane region" description="Helical" evidence="1">
    <location>
        <begin position="237"/>
        <end position="257"/>
    </location>
</feature>
<feature type="transmembrane region" description="Helical" evidence="1">
    <location>
        <begin position="265"/>
        <end position="285"/>
    </location>
</feature>
<feature type="transmembrane region" description="Helical" evidence="1">
    <location>
        <begin position="304"/>
        <end position="324"/>
    </location>
</feature>
<keyword id="KW-0997">Cell inner membrane</keyword>
<keyword id="KW-1003">Cell membrane</keyword>
<keyword id="KW-0472">Membrane</keyword>
<keyword id="KW-0520">NAD</keyword>
<keyword id="KW-0874">Quinone</keyword>
<keyword id="KW-1278">Translocase</keyword>
<keyword id="KW-0812">Transmembrane</keyword>
<keyword id="KW-1133">Transmembrane helix</keyword>
<keyword id="KW-0830">Ubiquinone</keyword>
<evidence type="ECO:0000255" key="1">
    <source>
        <dbReference type="HAMAP-Rule" id="MF_01350"/>
    </source>
</evidence>
<comment type="function">
    <text evidence="1">NDH-1 shuttles electrons from NADH, via FMN and iron-sulfur (Fe-S) centers, to quinones in the respiratory chain. The immediate electron acceptor for the enzyme in this species is believed to be ubiquinone. Couples the redox reaction to proton translocation (for every two electrons transferred, four hydrogen ions are translocated across the cytoplasmic membrane), and thus conserves the redox energy in a proton gradient. This subunit may bind ubiquinone.</text>
</comment>
<comment type="catalytic activity">
    <reaction evidence="1">
        <text>a quinone + NADH + 5 H(+)(in) = a quinol + NAD(+) + 4 H(+)(out)</text>
        <dbReference type="Rhea" id="RHEA:57888"/>
        <dbReference type="ChEBI" id="CHEBI:15378"/>
        <dbReference type="ChEBI" id="CHEBI:24646"/>
        <dbReference type="ChEBI" id="CHEBI:57540"/>
        <dbReference type="ChEBI" id="CHEBI:57945"/>
        <dbReference type="ChEBI" id="CHEBI:132124"/>
    </reaction>
</comment>
<comment type="subunit">
    <text evidence="1">NDH-1 is composed of 13 different subunits. Subunits NuoA, H, J, K, L, M, N constitute the membrane sector of the complex.</text>
</comment>
<comment type="subcellular location">
    <subcellularLocation>
        <location evidence="1">Cell inner membrane</location>
        <topology evidence="1">Multi-pass membrane protein</topology>
    </subcellularLocation>
</comment>
<comment type="similarity">
    <text evidence="1">Belongs to the complex I subunit 1 family.</text>
</comment>
<sequence>MSWITPDLIEILLSILKAVVILLVVVTCGAFMSFGERRLLGLFQNRYGPNRVGWGGSLQLVADMIKMFFKEDWIPKFSDRVIFTLAPMIAFTSLLLSFAIVPVSPNWVVADLNIGILFFLMMAGLAVYAVLFAGWSSNNKYSLLGAMRASAQTVSYEVFLGLSLMGVVAQAGSFNMTDIVNNQAHLWNVIPQFFGFVTFAIAGVAVCHRHPFDQPEAEQELADGYHIEYSGMKFGLFFVGEYIGIVTVSALMVTLFFGGWHGPFLPPFVWFALKTAFFMMMFILIRASLPRPRYDQVMSFGWKVCLPLTLINLLVTAAVILWQAQ</sequence>